<feature type="chain" id="PRO_1000025858" description="Ethanolamine ammonia-lyase small subunit">
    <location>
        <begin position="1"/>
        <end position="273"/>
    </location>
</feature>
<feature type="binding site" evidence="1">
    <location>
        <position position="164"/>
    </location>
    <ligand>
        <name>adenosylcob(III)alamin</name>
        <dbReference type="ChEBI" id="CHEBI:18408"/>
    </ligand>
</feature>
<feature type="binding site" evidence="1">
    <location>
        <position position="185"/>
    </location>
    <ligand>
        <name>adenosylcob(III)alamin</name>
        <dbReference type="ChEBI" id="CHEBI:18408"/>
    </ligand>
</feature>
<feature type="binding site" evidence="1">
    <location>
        <position position="214"/>
    </location>
    <ligand>
        <name>adenosylcob(III)alamin</name>
        <dbReference type="ChEBI" id="CHEBI:18408"/>
    </ligand>
</feature>
<sequence length="273" mass="30158">MNDKHLPDASAENPWLPLRQLTPARIALGRTGTSLPTRPQLDFQYAHAQARDAVHLPFDHAAISDGLRQRGRDSLLLHSAAADRHVYLQRPDLGRRLDEASVQRLREHAAGYDGQIDLAIVVADGLSALAVQRHTLPFLERLEEQALAEGWSLSPVVLVEQGRVAVADEIGELLRAKMSVILIGERPGLSSPDSLGLYFTWAPRVGLTDAYRNCISNVRLEGLSYGMAAHRLLYLMREACRRQLSGVNLKDEAEVQALEGEAPRTGNFLLARD</sequence>
<keyword id="KW-1283">Bacterial microcompartment</keyword>
<keyword id="KW-0846">Cobalamin</keyword>
<keyword id="KW-0170">Cobalt</keyword>
<keyword id="KW-0456">Lyase</keyword>
<comment type="function">
    <text evidence="1">Catalyzes the deamination of various vicinal amino-alcohols to oxo compounds. Allows this organism to utilize ethanolamine as the sole source of nitrogen and carbon in the presence of external vitamin B12.</text>
</comment>
<comment type="catalytic activity">
    <reaction evidence="1">
        <text>ethanolamine = acetaldehyde + NH4(+)</text>
        <dbReference type="Rhea" id="RHEA:15313"/>
        <dbReference type="ChEBI" id="CHEBI:15343"/>
        <dbReference type="ChEBI" id="CHEBI:28938"/>
        <dbReference type="ChEBI" id="CHEBI:57603"/>
        <dbReference type="EC" id="4.3.1.7"/>
    </reaction>
</comment>
<comment type="cofactor">
    <cofactor evidence="1">
        <name>adenosylcob(III)alamin</name>
        <dbReference type="ChEBI" id="CHEBI:18408"/>
    </cofactor>
    <text evidence="1">Binds between the large and small subunits.</text>
</comment>
<comment type="pathway">
    <text evidence="1">Amine and polyamine degradation; ethanolamine degradation.</text>
</comment>
<comment type="subunit">
    <text evidence="1">The basic unit is a heterodimer which dimerizes to form tetramers. The heterotetramers trimerize; 6 large subunits form a core ring with 6 small subunits projecting outwards.</text>
</comment>
<comment type="subcellular location">
    <subcellularLocation>
        <location evidence="1">Bacterial microcompartment</location>
    </subcellularLocation>
</comment>
<comment type="similarity">
    <text evidence="1">Belongs to the EutC family.</text>
</comment>
<evidence type="ECO:0000255" key="1">
    <source>
        <dbReference type="HAMAP-Rule" id="MF_00601"/>
    </source>
</evidence>
<protein>
    <recommendedName>
        <fullName evidence="1">Ethanolamine ammonia-lyase small subunit</fullName>
        <shortName evidence="1">EAL small subunit</shortName>
        <ecNumber evidence="1">4.3.1.7</ecNumber>
    </recommendedName>
</protein>
<gene>
    <name evidence="1" type="primary">eutC</name>
    <name type="ordered locus">PA14_11760</name>
</gene>
<dbReference type="EC" id="4.3.1.7" evidence="1"/>
<dbReference type="EMBL" id="CP000438">
    <property type="protein sequence ID" value="ABJ13298.1"/>
    <property type="molecule type" value="Genomic_DNA"/>
</dbReference>
<dbReference type="RefSeq" id="WP_003110520.1">
    <property type="nucleotide sequence ID" value="NZ_CP034244.1"/>
</dbReference>
<dbReference type="SMR" id="Q02SJ2"/>
<dbReference type="KEGG" id="pau:PA14_11760"/>
<dbReference type="PseudoCAP" id="PA14_11760"/>
<dbReference type="HOGENOM" id="CLU_068224_1_0_6"/>
<dbReference type="BioCyc" id="PAER208963:G1G74-979-MONOMER"/>
<dbReference type="UniPathway" id="UPA00560"/>
<dbReference type="Proteomes" id="UP000000653">
    <property type="component" value="Chromosome"/>
</dbReference>
<dbReference type="GO" id="GO:0009350">
    <property type="term" value="C:ethanolamine ammonia-lyase complex"/>
    <property type="evidence" value="ECO:0007669"/>
    <property type="project" value="UniProtKB-UniRule"/>
</dbReference>
<dbReference type="GO" id="GO:0031471">
    <property type="term" value="C:ethanolamine degradation polyhedral organelle"/>
    <property type="evidence" value="ECO:0007669"/>
    <property type="project" value="UniProtKB-UniRule"/>
</dbReference>
<dbReference type="GO" id="GO:0031419">
    <property type="term" value="F:cobalamin binding"/>
    <property type="evidence" value="ECO:0007669"/>
    <property type="project" value="UniProtKB-UniRule"/>
</dbReference>
<dbReference type="GO" id="GO:0008851">
    <property type="term" value="F:ethanolamine ammonia-lyase activity"/>
    <property type="evidence" value="ECO:0007669"/>
    <property type="project" value="UniProtKB-UniRule"/>
</dbReference>
<dbReference type="GO" id="GO:0006520">
    <property type="term" value="P:amino acid metabolic process"/>
    <property type="evidence" value="ECO:0007669"/>
    <property type="project" value="InterPro"/>
</dbReference>
<dbReference type="GO" id="GO:0046336">
    <property type="term" value="P:ethanolamine catabolic process"/>
    <property type="evidence" value="ECO:0007669"/>
    <property type="project" value="UniProtKB-UniRule"/>
</dbReference>
<dbReference type="FunFam" id="1.10.30.40:FF:000001">
    <property type="entry name" value="Ethanolamine ammonia-lyase light chain"/>
    <property type="match status" value="1"/>
</dbReference>
<dbReference type="FunFam" id="3.40.50.11240:FF:000001">
    <property type="entry name" value="Ethanolamine ammonia-lyase light chain"/>
    <property type="match status" value="1"/>
</dbReference>
<dbReference type="Gene3D" id="3.40.50.11240">
    <property type="entry name" value="Ethanolamine ammonia-lyase light chain (EutC)"/>
    <property type="match status" value="1"/>
</dbReference>
<dbReference type="Gene3D" id="1.10.30.40">
    <property type="entry name" value="Ethanolamine ammonia-lyase light chain (EutC), N-terminal domain"/>
    <property type="match status" value="1"/>
</dbReference>
<dbReference type="HAMAP" id="MF_00601">
    <property type="entry name" value="EutC"/>
    <property type="match status" value="1"/>
</dbReference>
<dbReference type="InterPro" id="IPR009246">
    <property type="entry name" value="EutC"/>
</dbReference>
<dbReference type="InterPro" id="IPR042251">
    <property type="entry name" value="EutC_C"/>
</dbReference>
<dbReference type="InterPro" id="IPR042255">
    <property type="entry name" value="EutC_N"/>
</dbReference>
<dbReference type="NCBIfam" id="NF003971">
    <property type="entry name" value="PRK05465.1"/>
    <property type="match status" value="1"/>
</dbReference>
<dbReference type="PANTHER" id="PTHR39330">
    <property type="entry name" value="ETHANOLAMINE AMMONIA-LYASE LIGHT CHAIN"/>
    <property type="match status" value="1"/>
</dbReference>
<dbReference type="PANTHER" id="PTHR39330:SF1">
    <property type="entry name" value="ETHANOLAMINE AMMONIA-LYASE SMALL SUBUNIT"/>
    <property type="match status" value="1"/>
</dbReference>
<dbReference type="Pfam" id="PF05985">
    <property type="entry name" value="EutC"/>
    <property type="match status" value="1"/>
</dbReference>
<dbReference type="PIRSF" id="PIRSF018982">
    <property type="entry name" value="EutC"/>
    <property type="match status" value="1"/>
</dbReference>
<proteinExistence type="inferred from homology"/>
<name>EUTC_PSEAB</name>
<organism>
    <name type="scientific">Pseudomonas aeruginosa (strain UCBPP-PA14)</name>
    <dbReference type="NCBI Taxonomy" id="208963"/>
    <lineage>
        <taxon>Bacteria</taxon>
        <taxon>Pseudomonadati</taxon>
        <taxon>Pseudomonadota</taxon>
        <taxon>Gammaproteobacteria</taxon>
        <taxon>Pseudomonadales</taxon>
        <taxon>Pseudomonadaceae</taxon>
        <taxon>Pseudomonas</taxon>
    </lineage>
</organism>
<accession>Q02SJ2</accession>
<reference key="1">
    <citation type="journal article" date="2006" name="Genome Biol.">
        <title>Genomic analysis reveals that Pseudomonas aeruginosa virulence is combinatorial.</title>
        <authorList>
            <person name="Lee D.G."/>
            <person name="Urbach J.M."/>
            <person name="Wu G."/>
            <person name="Liberati N.T."/>
            <person name="Feinbaum R.L."/>
            <person name="Miyata S."/>
            <person name="Diggins L.T."/>
            <person name="He J."/>
            <person name="Saucier M."/>
            <person name="Deziel E."/>
            <person name="Friedman L."/>
            <person name="Li L."/>
            <person name="Grills G."/>
            <person name="Montgomery K."/>
            <person name="Kucherlapati R."/>
            <person name="Rahme L.G."/>
            <person name="Ausubel F.M."/>
        </authorList>
    </citation>
    <scope>NUCLEOTIDE SEQUENCE [LARGE SCALE GENOMIC DNA]</scope>
    <source>
        <strain>UCBPP-PA14</strain>
    </source>
</reference>